<reference key="1">
    <citation type="journal article" date="2008" name="PLoS Genet.">
        <title>Genomic islands in the pathogenic filamentous fungus Aspergillus fumigatus.</title>
        <authorList>
            <person name="Fedorova N.D."/>
            <person name="Khaldi N."/>
            <person name="Joardar V.S."/>
            <person name="Maiti R."/>
            <person name="Amedeo P."/>
            <person name="Anderson M.J."/>
            <person name="Crabtree J."/>
            <person name="Silva J.C."/>
            <person name="Badger J.H."/>
            <person name="Albarraq A."/>
            <person name="Angiuoli S."/>
            <person name="Bussey H."/>
            <person name="Bowyer P."/>
            <person name="Cotty P.J."/>
            <person name="Dyer P.S."/>
            <person name="Egan A."/>
            <person name="Galens K."/>
            <person name="Fraser-Liggett C.M."/>
            <person name="Haas B.J."/>
            <person name="Inman J.M."/>
            <person name="Kent R."/>
            <person name="Lemieux S."/>
            <person name="Malavazi I."/>
            <person name="Orvis J."/>
            <person name="Roemer T."/>
            <person name="Ronning C.M."/>
            <person name="Sundaram J.P."/>
            <person name="Sutton G."/>
            <person name="Turner G."/>
            <person name="Venter J.C."/>
            <person name="White O.R."/>
            <person name="Whitty B.R."/>
            <person name="Youngman P."/>
            <person name="Wolfe K.H."/>
            <person name="Goldman G.H."/>
            <person name="Wortman J.R."/>
            <person name="Jiang B."/>
            <person name="Denning D.W."/>
            <person name="Nierman W.C."/>
        </authorList>
    </citation>
    <scope>NUCLEOTIDE SEQUENCE [LARGE SCALE GENOMIC DNA]</scope>
    <source>
        <strain>ATCC 1007 / CBS 513.65 / DSM 816 / NCTC 3887 / NRRL 1 / QM 1276 / 107</strain>
    </source>
</reference>
<dbReference type="EMBL" id="DS027052">
    <property type="protein sequence ID" value="EAW11197.1"/>
    <property type="molecule type" value="Genomic_DNA"/>
</dbReference>
<dbReference type="RefSeq" id="XP_001272623.1">
    <property type="nucleotide sequence ID" value="XM_001272622.1"/>
</dbReference>
<dbReference type="SMR" id="A1CE98"/>
<dbReference type="STRING" id="344612.A1CE98"/>
<dbReference type="EnsemblFungi" id="EAW11197">
    <property type="protein sequence ID" value="EAW11197"/>
    <property type="gene ID" value="ACLA_088880"/>
</dbReference>
<dbReference type="GeneID" id="4705378"/>
<dbReference type="KEGG" id="act:ACLA_088880"/>
<dbReference type="VEuPathDB" id="FungiDB:ACLA_088880"/>
<dbReference type="eggNOG" id="KOG2444">
    <property type="taxonomic scope" value="Eukaryota"/>
</dbReference>
<dbReference type="HOGENOM" id="CLU_052691_0_0_1"/>
<dbReference type="OMA" id="QAIHPTE"/>
<dbReference type="OrthoDB" id="2288928at2759"/>
<dbReference type="Proteomes" id="UP000006701">
    <property type="component" value="Unassembled WGS sequence"/>
</dbReference>
<dbReference type="GO" id="GO:0005730">
    <property type="term" value="C:nucleolus"/>
    <property type="evidence" value="ECO:0007669"/>
    <property type="project" value="UniProtKB-SubCell"/>
</dbReference>
<dbReference type="Gene3D" id="2.130.10.10">
    <property type="entry name" value="YVTN repeat-like/Quinoprotein amine dehydrogenase"/>
    <property type="match status" value="1"/>
</dbReference>
<dbReference type="InterPro" id="IPR015943">
    <property type="entry name" value="WD40/YVTN_repeat-like_dom_sf"/>
</dbReference>
<dbReference type="InterPro" id="IPR036322">
    <property type="entry name" value="WD40_repeat_dom_sf"/>
</dbReference>
<dbReference type="InterPro" id="IPR050505">
    <property type="entry name" value="WDR55_POC1"/>
</dbReference>
<dbReference type="PANTHER" id="PTHR44019">
    <property type="entry name" value="WD REPEAT-CONTAINING PROTEIN 55"/>
    <property type="match status" value="1"/>
</dbReference>
<dbReference type="PANTHER" id="PTHR44019:SF20">
    <property type="entry name" value="WD REPEAT-CONTAINING PROTEIN 55"/>
    <property type="match status" value="1"/>
</dbReference>
<dbReference type="SUPFAM" id="SSF50978">
    <property type="entry name" value="WD40 repeat-like"/>
    <property type="match status" value="1"/>
</dbReference>
<protein>
    <recommendedName>
        <fullName>WD repeat-containing protein jip5</fullName>
    </recommendedName>
</protein>
<sequence length="414" mass="44101">MFDTVCTLPLSADLFSQAIHPNEPVVSVGLSTGHVQTFRLPSEESSDDDDGTASNSSARNGKGHIDTMWRTRRHKGSCRCLGFGVDGEMLYSAGTDGLVKAAKAETGVVENKIAIPLAKDGSVDAPTIIHALSPQTLLLATDSSALHLYDLRIPFSNVSAKPQQTHHPHDDYISSLTPLPPSDTSTSGFSKQWVTTGGTTLAVTDLRRGVMVRSEDQGEELVSSVYIGGLASSGTSRGEKVLVGGSSGVLTLWEKGAWDDQDERIYVQREAGGGEALETLAVVPDELGKGKMVAIGLGSGGVKFVRIGMNKVVSEVMHDETEGVIGLGFDVEGRMVSGGGQVVKVWHEAVGSNDMDVDMAGGKRMFGGDSDDSDDDNDSEDSEQEQRQPVEPQRKRKKNKGKGKRDIIAFADID</sequence>
<organism>
    <name type="scientific">Aspergillus clavatus (strain ATCC 1007 / CBS 513.65 / DSM 816 / NCTC 3887 / NRRL 1 / QM 1276 / 107)</name>
    <dbReference type="NCBI Taxonomy" id="344612"/>
    <lineage>
        <taxon>Eukaryota</taxon>
        <taxon>Fungi</taxon>
        <taxon>Dikarya</taxon>
        <taxon>Ascomycota</taxon>
        <taxon>Pezizomycotina</taxon>
        <taxon>Eurotiomycetes</taxon>
        <taxon>Eurotiomycetidae</taxon>
        <taxon>Eurotiales</taxon>
        <taxon>Aspergillaceae</taxon>
        <taxon>Aspergillus</taxon>
        <taxon>Aspergillus subgen. Fumigati</taxon>
    </lineage>
</organism>
<gene>
    <name type="primary">jip5</name>
    <name type="ORF">ACLA_088880</name>
</gene>
<comment type="subcellular location">
    <subcellularLocation>
        <location evidence="1">Nucleus</location>
        <location evidence="1">Nucleolus</location>
    </subcellularLocation>
</comment>
<comment type="similarity">
    <text evidence="3">Belongs to the WD repeat WDR55 family.</text>
</comment>
<proteinExistence type="inferred from homology"/>
<feature type="chain" id="PRO_0000333546" description="WD repeat-containing protein jip5">
    <location>
        <begin position="1"/>
        <end position="414"/>
    </location>
</feature>
<feature type="repeat" description="WD 1">
    <location>
        <begin position="9"/>
        <end position="48"/>
    </location>
</feature>
<feature type="repeat" description="WD 2">
    <location>
        <begin position="73"/>
        <end position="112"/>
    </location>
</feature>
<feature type="repeat" description="WD 3">
    <location>
        <begin position="118"/>
        <end position="159"/>
    </location>
</feature>
<feature type="repeat" description="WD 4">
    <location>
        <begin position="222"/>
        <end position="263"/>
    </location>
</feature>
<feature type="repeat" description="WD 5">
    <location>
        <begin position="319"/>
        <end position="356"/>
    </location>
</feature>
<feature type="region of interest" description="Disordered" evidence="2">
    <location>
        <begin position="39"/>
        <end position="65"/>
    </location>
</feature>
<feature type="region of interest" description="Disordered" evidence="2">
    <location>
        <begin position="357"/>
        <end position="414"/>
    </location>
</feature>
<feature type="compositionally biased region" description="Acidic residues" evidence="2">
    <location>
        <begin position="369"/>
        <end position="383"/>
    </location>
</feature>
<feature type="compositionally biased region" description="Basic residues" evidence="2">
    <location>
        <begin position="394"/>
        <end position="403"/>
    </location>
</feature>
<name>JIP5_ASPCL</name>
<keyword id="KW-0539">Nucleus</keyword>
<keyword id="KW-1185">Reference proteome</keyword>
<keyword id="KW-0677">Repeat</keyword>
<keyword id="KW-0853">WD repeat</keyword>
<evidence type="ECO:0000250" key="1"/>
<evidence type="ECO:0000256" key="2">
    <source>
        <dbReference type="SAM" id="MobiDB-lite"/>
    </source>
</evidence>
<evidence type="ECO:0000305" key="3"/>
<accession>A1CE98</accession>